<feature type="chain" id="PRO_0000206987" description="Exodeoxyribonuclease 7 small subunit">
    <location>
        <begin position="1"/>
        <end position="78"/>
    </location>
</feature>
<name>EX7S_CUTAK</name>
<reference key="1">
    <citation type="journal article" date="2004" name="Science">
        <title>The complete genome sequence of Propionibacterium acnes, a commensal of human skin.</title>
        <authorList>
            <person name="Brueggemann H."/>
            <person name="Henne A."/>
            <person name="Hoster F."/>
            <person name="Liesegang H."/>
            <person name="Wiezer A."/>
            <person name="Strittmatter A."/>
            <person name="Hujer S."/>
            <person name="Duerre P."/>
            <person name="Gottschalk G."/>
        </authorList>
    </citation>
    <scope>NUCLEOTIDE SEQUENCE [LARGE SCALE GENOMIC DNA]</scope>
    <source>
        <strain>DSM 16379 / KPA171202</strain>
    </source>
</reference>
<sequence length="78" mass="8564">MTDTTPNSAPEEPEITYEAARDELVEIVTRLESGGISLAETMTLWERGEKLADICQSWLNGARARIEAARSDAETAQP</sequence>
<comment type="function">
    <text evidence="1">Bidirectionally degrades single-stranded DNA into large acid-insoluble oligonucleotides, which are then degraded further into small acid-soluble oligonucleotides.</text>
</comment>
<comment type="catalytic activity">
    <reaction evidence="1">
        <text>Exonucleolytic cleavage in either 5'- to 3'- or 3'- to 5'-direction to yield nucleoside 5'-phosphates.</text>
        <dbReference type="EC" id="3.1.11.6"/>
    </reaction>
</comment>
<comment type="subunit">
    <text evidence="1">Heterooligomer composed of large and small subunits.</text>
</comment>
<comment type="subcellular location">
    <subcellularLocation>
        <location evidence="1">Cytoplasm</location>
    </subcellularLocation>
</comment>
<comment type="similarity">
    <text evidence="1">Belongs to the XseB family.</text>
</comment>
<accession>Q6AA93</accession>
<proteinExistence type="inferred from homology"/>
<keyword id="KW-0963">Cytoplasm</keyword>
<keyword id="KW-0269">Exonuclease</keyword>
<keyword id="KW-0378">Hydrolase</keyword>
<keyword id="KW-0540">Nuclease</keyword>
<gene>
    <name evidence="1" type="primary">xseB</name>
    <name type="ordered locus">PPA0568</name>
</gene>
<organism>
    <name type="scientific">Cutibacterium acnes (strain DSM 16379 / KPA171202)</name>
    <name type="common">Propionibacterium acnes</name>
    <dbReference type="NCBI Taxonomy" id="267747"/>
    <lineage>
        <taxon>Bacteria</taxon>
        <taxon>Bacillati</taxon>
        <taxon>Actinomycetota</taxon>
        <taxon>Actinomycetes</taxon>
        <taxon>Propionibacteriales</taxon>
        <taxon>Propionibacteriaceae</taxon>
        <taxon>Cutibacterium</taxon>
    </lineage>
</organism>
<evidence type="ECO:0000255" key="1">
    <source>
        <dbReference type="HAMAP-Rule" id="MF_00337"/>
    </source>
</evidence>
<protein>
    <recommendedName>
        <fullName evidence="1">Exodeoxyribonuclease 7 small subunit</fullName>
        <ecNumber evidence="1">3.1.11.6</ecNumber>
    </recommendedName>
    <alternativeName>
        <fullName evidence="1">Exodeoxyribonuclease VII small subunit</fullName>
        <shortName evidence="1">Exonuclease VII small subunit</shortName>
    </alternativeName>
</protein>
<dbReference type="EC" id="3.1.11.6" evidence="1"/>
<dbReference type="EMBL" id="AE017283">
    <property type="protein sequence ID" value="AAT82323.1"/>
    <property type="molecule type" value="Genomic_DNA"/>
</dbReference>
<dbReference type="RefSeq" id="WP_002514130.1">
    <property type="nucleotide sequence ID" value="NZ_CP025935.1"/>
</dbReference>
<dbReference type="SMR" id="Q6AA93"/>
<dbReference type="EnsemblBacteria" id="AAT82323">
    <property type="protein sequence ID" value="AAT82323"/>
    <property type="gene ID" value="PPA0568"/>
</dbReference>
<dbReference type="KEGG" id="pac:PPA0568"/>
<dbReference type="eggNOG" id="COG1722">
    <property type="taxonomic scope" value="Bacteria"/>
</dbReference>
<dbReference type="HOGENOM" id="CLU_145918_0_2_11"/>
<dbReference type="Proteomes" id="UP000000603">
    <property type="component" value="Chromosome"/>
</dbReference>
<dbReference type="GO" id="GO:0005829">
    <property type="term" value="C:cytosol"/>
    <property type="evidence" value="ECO:0007669"/>
    <property type="project" value="TreeGrafter"/>
</dbReference>
<dbReference type="GO" id="GO:0009318">
    <property type="term" value="C:exodeoxyribonuclease VII complex"/>
    <property type="evidence" value="ECO:0007669"/>
    <property type="project" value="InterPro"/>
</dbReference>
<dbReference type="GO" id="GO:0008855">
    <property type="term" value="F:exodeoxyribonuclease VII activity"/>
    <property type="evidence" value="ECO:0007669"/>
    <property type="project" value="UniProtKB-UniRule"/>
</dbReference>
<dbReference type="GO" id="GO:0006308">
    <property type="term" value="P:DNA catabolic process"/>
    <property type="evidence" value="ECO:0007669"/>
    <property type="project" value="UniProtKB-UniRule"/>
</dbReference>
<dbReference type="Gene3D" id="1.10.287.1040">
    <property type="entry name" value="Exonuclease VII, small subunit"/>
    <property type="match status" value="1"/>
</dbReference>
<dbReference type="HAMAP" id="MF_00337">
    <property type="entry name" value="Exonuc_7_S"/>
    <property type="match status" value="1"/>
</dbReference>
<dbReference type="InterPro" id="IPR003761">
    <property type="entry name" value="Exonuc_VII_S"/>
</dbReference>
<dbReference type="InterPro" id="IPR037004">
    <property type="entry name" value="Exonuc_VII_ssu_sf"/>
</dbReference>
<dbReference type="NCBIfam" id="NF002139">
    <property type="entry name" value="PRK00977.1-3"/>
    <property type="match status" value="1"/>
</dbReference>
<dbReference type="NCBIfam" id="TIGR01280">
    <property type="entry name" value="xseB"/>
    <property type="match status" value="1"/>
</dbReference>
<dbReference type="PANTHER" id="PTHR34137">
    <property type="entry name" value="EXODEOXYRIBONUCLEASE 7 SMALL SUBUNIT"/>
    <property type="match status" value="1"/>
</dbReference>
<dbReference type="PANTHER" id="PTHR34137:SF1">
    <property type="entry name" value="EXODEOXYRIBONUCLEASE 7 SMALL SUBUNIT"/>
    <property type="match status" value="1"/>
</dbReference>
<dbReference type="Pfam" id="PF02609">
    <property type="entry name" value="Exonuc_VII_S"/>
    <property type="match status" value="1"/>
</dbReference>
<dbReference type="PIRSF" id="PIRSF006488">
    <property type="entry name" value="Exonuc_VII_S"/>
    <property type="match status" value="1"/>
</dbReference>
<dbReference type="SUPFAM" id="SSF116842">
    <property type="entry name" value="XseB-like"/>
    <property type="match status" value="1"/>
</dbReference>